<proteinExistence type="predicted"/>
<organism>
    <name type="scientific">Cymbidium mosaic virus (strain Singapore)</name>
    <dbReference type="NCBI Taxonomy" id="31725"/>
    <lineage>
        <taxon>Viruses</taxon>
        <taxon>Riboviria</taxon>
        <taxon>Orthornavirae</taxon>
        <taxon>Kitrinoviricota</taxon>
        <taxon>Alsuviricetes</taxon>
        <taxon>Tymovirales</taxon>
        <taxon>Alphaflexiviridae</taxon>
        <taxon>Potexvirus</taxon>
        <taxon>Cymbidium mosaic virus</taxon>
    </lineage>
</organism>
<dbReference type="EMBL" id="X62664">
    <property type="protein sequence ID" value="CAA44531.1"/>
    <property type="molecule type" value="Genomic_RNA"/>
</dbReference>
<dbReference type="PIR" id="S20928">
    <property type="entry name" value="WMWG14"/>
</dbReference>
<dbReference type="RefSeq" id="NP_054027.1">
    <property type="nucleotide sequence ID" value="NC_001812.1"/>
</dbReference>
<dbReference type="SMR" id="Q00479"/>
<dbReference type="GeneID" id="1724799"/>
<dbReference type="KEGG" id="vg:1724799"/>
<dbReference type="InterPro" id="IPR001896">
    <property type="entry name" value="Plant_vir_prot"/>
</dbReference>
<dbReference type="Pfam" id="PF01307">
    <property type="entry name" value="Plant_vir_prot"/>
    <property type="match status" value="1"/>
</dbReference>
<feature type="chain" id="PRO_0000222644" description="Uncharacterized 12.4 kDa protein">
    <location>
        <begin position="1"/>
        <end position="112"/>
    </location>
</feature>
<protein>
    <recommendedName>
        <fullName>Uncharacterized 12.4 kDa protein</fullName>
    </recommendedName>
</protein>
<reference key="1">
    <citation type="journal article" date="1992" name="Plant Mol. Biol.">
        <title>Nucleotide sequences of the two ORFs upstream to the coat protein gene of cymbidium mosaic virus.</title>
        <authorList>
            <person name="Neo K.K."/>
            <person name="Wong S.M."/>
            <person name="Wu M."/>
        </authorList>
    </citation>
    <scope>NUCLEOTIDE SEQUENCE [GENOMIC RNA]</scope>
</reference>
<organismHost>
    <name type="scientific">Cattleya</name>
    <dbReference type="NCBI Taxonomy" id="38236"/>
</organismHost>
<organismHost>
    <name type="scientific">Coelogyne imbricata</name>
    <dbReference type="NCBI Taxonomy" id="141750"/>
</organismHost>
<organismHost>
    <name type="scientific">Cymbidium aloifolium</name>
    <dbReference type="NCBI Taxonomy" id="112603"/>
</organismHost>
<organismHost>
    <name type="scientific">Cymbidium hybrid cultivar</name>
    <dbReference type="NCBI Taxonomy" id="28471"/>
</organismHost>
<organismHost>
    <name type="scientific">Cymbidium iridioides</name>
    <dbReference type="NCBI Taxonomy" id="160533"/>
</organismHost>
<organismHost>
    <name type="scientific">Epidendrum</name>
    <dbReference type="NCBI Taxonomy" id="38234"/>
</organismHost>
<organismHost>
    <name type="scientific">Laelia</name>
    <dbReference type="NCBI Taxonomy" id="123155"/>
</organismHost>
<organismHost>
    <name type="scientific">Oncidium</name>
    <dbReference type="NCBI Taxonomy" id="45173"/>
</organismHost>
<organismHost>
    <name type="scientific">Phaius tancarvilleae</name>
    <name type="common">Nun's hood orchid</name>
    <name type="synonym">Greater swamp orchid</name>
    <dbReference type="NCBI Taxonomy" id="120015"/>
</organismHost>
<organismHost>
    <name type="scientific">Phalaenopsis</name>
    <dbReference type="NCBI Taxonomy" id="36459"/>
</organismHost>
<organismHost>
    <name type="scientific">Vanda</name>
    <dbReference type="NCBI Taxonomy" id="38198"/>
</organismHost>
<organismHost>
    <name type="scientific">Zygopetalum</name>
    <dbReference type="NCBI Taxonomy" id="78858"/>
</organismHost>
<accession>Q00479</accession>
<name>Y12K_CMVSI</name>
<sequence length="112" mass="12475">MPGLVPPPDHSKSLFVLAIGITVVSALFVLKSHTFPIAGDNIHRFPSGGQYKDGTKQINYCPPTHARYPKYPDYKWLAATAAIVIPLCLYISYHPGNNIRRICPCCNTYHHP</sequence>